<proteinExistence type="inferred from homology"/>
<protein>
    <recommendedName>
        <fullName>Uncharacterized protein SAV1409</fullName>
    </recommendedName>
</protein>
<sequence>MALKHYKNSDSTVFNDAKALFDLNKNILLKGPTGSGKTKLAETLSEVVDTPMHQVNCSVDLDTESLLGFKTIKTNAEGQQEIVFVDGPVIKAMKEGHILYIDEINMAKPETLPVLNGVLDYRRQITNPYTGEVIKAVPGFNVIAAINEGYVGTLPMNEALKNRFVVIHVDYIDGDILKNVIKEQSLLQDDKQIEQIIKFNEDLRTMSKQGQISEEAASIRALLDLCDLITVMPVERAIKRTIIDKLEDEREQQAIYNAVELNF</sequence>
<comment type="similarity">
    <text evidence="2">Belongs to the CbbQ/NirQ/NorQ/GpvN family.</text>
</comment>
<name>Y1409_STAAM</name>
<feature type="chain" id="PRO_0000284809" description="Uncharacterized protein SAV1409">
    <location>
        <begin position="1"/>
        <end position="263"/>
    </location>
</feature>
<feature type="binding site" evidence="1">
    <location>
        <begin position="31"/>
        <end position="38"/>
    </location>
    <ligand>
        <name>ATP</name>
        <dbReference type="ChEBI" id="CHEBI:30616"/>
    </ligand>
</feature>
<keyword id="KW-0067">ATP-binding</keyword>
<keyword id="KW-0547">Nucleotide-binding</keyword>
<evidence type="ECO:0000255" key="1"/>
<evidence type="ECO:0000305" key="2"/>
<dbReference type="EMBL" id="BA000017">
    <property type="protein sequence ID" value="BAB57571.1"/>
    <property type="molecule type" value="Genomic_DNA"/>
</dbReference>
<dbReference type="RefSeq" id="WP_001185421.1">
    <property type="nucleotide sequence ID" value="NC_002758.2"/>
</dbReference>
<dbReference type="SMR" id="Q99U78"/>
<dbReference type="KEGG" id="sav:SAV1409"/>
<dbReference type="HOGENOM" id="CLU_080347_0_0_9"/>
<dbReference type="PhylomeDB" id="Q99U78"/>
<dbReference type="Proteomes" id="UP000002481">
    <property type="component" value="Chromosome"/>
</dbReference>
<dbReference type="GO" id="GO:0005524">
    <property type="term" value="F:ATP binding"/>
    <property type="evidence" value="ECO:0007669"/>
    <property type="project" value="UniProtKB-KW"/>
</dbReference>
<dbReference type="GO" id="GO:0016887">
    <property type="term" value="F:ATP hydrolysis activity"/>
    <property type="evidence" value="ECO:0007669"/>
    <property type="project" value="InterPro"/>
</dbReference>
<dbReference type="CDD" id="cd00009">
    <property type="entry name" value="AAA"/>
    <property type="match status" value="1"/>
</dbReference>
<dbReference type="Gene3D" id="3.40.50.300">
    <property type="entry name" value="P-loop containing nucleotide triphosphate hydrolases"/>
    <property type="match status" value="1"/>
</dbReference>
<dbReference type="InterPro" id="IPR011704">
    <property type="entry name" value="ATPase_dyneun-rel_AAA"/>
</dbReference>
<dbReference type="InterPro" id="IPR050764">
    <property type="entry name" value="CbbQ/NirQ/NorQ/GpvN"/>
</dbReference>
<dbReference type="InterPro" id="IPR013615">
    <property type="entry name" value="CbbQ_C"/>
</dbReference>
<dbReference type="InterPro" id="IPR001270">
    <property type="entry name" value="ClpA/B"/>
</dbReference>
<dbReference type="InterPro" id="IPR027417">
    <property type="entry name" value="P-loop_NTPase"/>
</dbReference>
<dbReference type="PANTHER" id="PTHR42759:SF1">
    <property type="entry name" value="MAGNESIUM-CHELATASE SUBUNIT CHLD"/>
    <property type="match status" value="1"/>
</dbReference>
<dbReference type="PANTHER" id="PTHR42759">
    <property type="entry name" value="MOXR FAMILY PROTEIN"/>
    <property type="match status" value="1"/>
</dbReference>
<dbReference type="Pfam" id="PF07728">
    <property type="entry name" value="AAA_5"/>
    <property type="match status" value="1"/>
</dbReference>
<dbReference type="Pfam" id="PF08406">
    <property type="entry name" value="CbbQ_C"/>
    <property type="match status" value="1"/>
</dbReference>
<dbReference type="PRINTS" id="PR00300">
    <property type="entry name" value="CLPPROTEASEA"/>
</dbReference>
<dbReference type="SUPFAM" id="SSF52540">
    <property type="entry name" value="P-loop containing nucleoside triphosphate hydrolases"/>
    <property type="match status" value="1"/>
</dbReference>
<gene>
    <name type="ordered locus">SAV1409</name>
</gene>
<organism>
    <name type="scientific">Staphylococcus aureus (strain Mu50 / ATCC 700699)</name>
    <dbReference type="NCBI Taxonomy" id="158878"/>
    <lineage>
        <taxon>Bacteria</taxon>
        <taxon>Bacillati</taxon>
        <taxon>Bacillota</taxon>
        <taxon>Bacilli</taxon>
        <taxon>Bacillales</taxon>
        <taxon>Staphylococcaceae</taxon>
        <taxon>Staphylococcus</taxon>
    </lineage>
</organism>
<reference key="1">
    <citation type="journal article" date="2001" name="Lancet">
        <title>Whole genome sequencing of meticillin-resistant Staphylococcus aureus.</title>
        <authorList>
            <person name="Kuroda M."/>
            <person name="Ohta T."/>
            <person name="Uchiyama I."/>
            <person name="Baba T."/>
            <person name="Yuzawa H."/>
            <person name="Kobayashi I."/>
            <person name="Cui L."/>
            <person name="Oguchi A."/>
            <person name="Aoki K."/>
            <person name="Nagai Y."/>
            <person name="Lian J.-Q."/>
            <person name="Ito T."/>
            <person name="Kanamori M."/>
            <person name="Matsumaru H."/>
            <person name="Maruyama A."/>
            <person name="Murakami H."/>
            <person name="Hosoyama A."/>
            <person name="Mizutani-Ui Y."/>
            <person name="Takahashi N.K."/>
            <person name="Sawano T."/>
            <person name="Inoue R."/>
            <person name="Kaito C."/>
            <person name="Sekimizu K."/>
            <person name="Hirakawa H."/>
            <person name="Kuhara S."/>
            <person name="Goto S."/>
            <person name="Yabuzaki J."/>
            <person name="Kanehisa M."/>
            <person name="Yamashita A."/>
            <person name="Oshima K."/>
            <person name="Furuya K."/>
            <person name="Yoshino C."/>
            <person name="Shiba T."/>
            <person name="Hattori M."/>
            <person name="Ogasawara N."/>
            <person name="Hayashi H."/>
            <person name="Hiramatsu K."/>
        </authorList>
    </citation>
    <scope>NUCLEOTIDE SEQUENCE [LARGE SCALE GENOMIC DNA]</scope>
    <source>
        <strain>Mu50 / ATCC 700699</strain>
    </source>
</reference>
<accession>Q99U78</accession>